<evidence type="ECO:0000255" key="1">
    <source>
        <dbReference type="HAMAP-Rule" id="MF_00148"/>
    </source>
</evidence>
<dbReference type="EC" id="3.2.2.27" evidence="1"/>
<dbReference type="EMBL" id="CP000608">
    <property type="protein sequence ID" value="ABO46289.1"/>
    <property type="molecule type" value="Genomic_DNA"/>
</dbReference>
<dbReference type="RefSeq" id="WP_003018069.1">
    <property type="nucleotide sequence ID" value="NC_009257.1"/>
</dbReference>
<dbReference type="SMR" id="A4IWI7"/>
<dbReference type="KEGG" id="ftw:FTW_0348"/>
<dbReference type="HOGENOM" id="CLU_032162_3_1_6"/>
<dbReference type="GO" id="GO:0005737">
    <property type="term" value="C:cytoplasm"/>
    <property type="evidence" value="ECO:0007669"/>
    <property type="project" value="UniProtKB-SubCell"/>
</dbReference>
<dbReference type="GO" id="GO:0004844">
    <property type="term" value="F:uracil DNA N-glycosylase activity"/>
    <property type="evidence" value="ECO:0007669"/>
    <property type="project" value="UniProtKB-UniRule"/>
</dbReference>
<dbReference type="GO" id="GO:0097510">
    <property type="term" value="P:base-excision repair, AP site formation via deaminated base removal"/>
    <property type="evidence" value="ECO:0007669"/>
    <property type="project" value="TreeGrafter"/>
</dbReference>
<dbReference type="CDD" id="cd10027">
    <property type="entry name" value="UDG-F1-like"/>
    <property type="match status" value="1"/>
</dbReference>
<dbReference type="FunFam" id="3.40.470.10:FF:000001">
    <property type="entry name" value="Uracil-DNA glycosylase"/>
    <property type="match status" value="1"/>
</dbReference>
<dbReference type="Gene3D" id="3.40.470.10">
    <property type="entry name" value="Uracil-DNA glycosylase-like domain"/>
    <property type="match status" value="1"/>
</dbReference>
<dbReference type="HAMAP" id="MF_00148">
    <property type="entry name" value="UDG"/>
    <property type="match status" value="1"/>
</dbReference>
<dbReference type="InterPro" id="IPR002043">
    <property type="entry name" value="UDG_fam1"/>
</dbReference>
<dbReference type="InterPro" id="IPR018085">
    <property type="entry name" value="Ura-DNA_Glyclase_AS"/>
</dbReference>
<dbReference type="InterPro" id="IPR005122">
    <property type="entry name" value="Uracil-DNA_glycosylase-like"/>
</dbReference>
<dbReference type="InterPro" id="IPR036895">
    <property type="entry name" value="Uracil-DNA_glycosylase-like_sf"/>
</dbReference>
<dbReference type="NCBIfam" id="NF003588">
    <property type="entry name" value="PRK05254.1-1"/>
    <property type="match status" value="1"/>
</dbReference>
<dbReference type="NCBIfam" id="NF003589">
    <property type="entry name" value="PRK05254.1-2"/>
    <property type="match status" value="1"/>
</dbReference>
<dbReference type="NCBIfam" id="NF003591">
    <property type="entry name" value="PRK05254.1-4"/>
    <property type="match status" value="1"/>
</dbReference>
<dbReference type="NCBIfam" id="NF003592">
    <property type="entry name" value="PRK05254.1-5"/>
    <property type="match status" value="1"/>
</dbReference>
<dbReference type="NCBIfam" id="TIGR00628">
    <property type="entry name" value="ung"/>
    <property type="match status" value="1"/>
</dbReference>
<dbReference type="PANTHER" id="PTHR11264">
    <property type="entry name" value="URACIL-DNA GLYCOSYLASE"/>
    <property type="match status" value="1"/>
</dbReference>
<dbReference type="PANTHER" id="PTHR11264:SF0">
    <property type="entry name" value="URACIL-DNA GLYCOSYLASE"/>
    <property type="match status" value="1"/>
</dbReference>
<dbReference type="Pfam" id="PF03167">
    <property type="entry name" value="UDG"/>
    <property type="match status" value="1"/>
</dbReference>
<dbReference type="SMART" id="SM00986">
    <property type="entry name" value="UDG"/>
    <property type="match status" value="1"/>
</dbReference>
<dbReference type="SMART" id="SM00987">
    <property type="entry name" value="UreE_C"/>
    <property type="match status" value="1"/>
</dbReference>
<dbReference type="SUPFAM" id="SSF52141">
    <property type="entry name" value="Uracil-DNA glycosylase-like"/>
    <property type="match status" value="1"/>
</dbReference>
<dbReference type="PROSITE" id="PS00130">
    <property type="entry name" value="U_DNA_GLYCOSYLASE"/>
    <property type="match status" value="1"/>
</dbReference>
<reference key="1">
    <citation type="journal article" date="2007" name="PLoS ONE">
        <title>Complete genomic characterization of a pathogenic A.II strain of Francisella tularensis subspecies tularensis.</title>
        <authorList>
            <person name="Beckstrom-Sternberg S.M."/>
            <person name="Auerbach R.K."/>
            <person name="Godbole S."/>
            <person name="Pearson J.V."/>
            <person name="Beckstrom-Sternberg J.S."/>
            <person name="Deng Z."/>
            <person name="Munk C."/>
            <person name="Kubota K."/>
            <person name="Zhou Y."/>
            <person name="Bruce D."/>
            <person name="Noronha J."/>
            <person name="Scheuermann R.H."/>
            <person name="Wang A."/>
            <person name="Wei X."/>
            <person name="Wang J."/>
            <person name="Hao J."/>
            <person name="Wagner D.M."/>
            <person name="Brettin T.S."/>
            <person name="Brown N."/>
            <person name="Gilna P."/>
            <person name="Keim P.S."/>
        </authorList>
    </citation>
    <scope>NUCLEOTIDE SEQUENCE [LARGE SCALE GENOMIC DNA]</scope>
    <source>
        <strain>WY96-3418</strain>
    </source>
</reference>
<accession>A4IWI7</accession>
<keyword id="KW-0963">Cytoplasm</keyword>
<keyword id="KW-0227">DNA damage</keyword>
<keyword id="KW-0234">DNA repair</keyword>
<keyword id="KW-0378">Hydrolase</keyword>
<name>UNG_FRATW</name>
<gene>
    <name evidence="1" type="primary">ung</name>
    <name type="ordered locus">FTW_0348</name>
</gene>
<comment type="function">
    <text evidence="1">Excises uracil residues from the DNA which can arise as a result of misincorporation of dUMP residues by DNA polymerase or due to deamination of cytosine.</text>
</comment>
<comment type="catalytic activity">
    <reaction evidence="1">
        <text>Hydrolyzes single-stranded DNA or mismatched double-stranded DNA and polynucleotides, releasing free uracil.</text>
        <dbReference type="EC" id="3.2.2.27"/>
    </reaction>
</comment>
<comment type="subcellular location">
    <subcellularLocation>
        <location evidence="1">Cytoplasm</location>
    </subcellularLocation>
</comment>
<comment type="similarity">
    <text evidence="1">Belongs to the uracil-DNA glycosylase (UDG) superfamily. UNG family.</text>
</comment>
<proteinExistence type="inferred from homology"/>
<sequence length="220" mass="25298">MTWSDILAEEKQKPYFKQILDFLACESAKGKVIFPTKENIFNAFKYTELDNLKVVILGQDPYHNYNQAHGLAFSVQKGVDIPPSLQNIYKELARSIPEFKTPNHGYLVDWAKQGVFLLNTTLTVEAHKANSHKDIGWETFTDTVINKISENKHNVVFMLWGSHARKKKVLIDSSRHLILESTHPSPLSAHRGFLGCNHFVDCNKYLIEKKDQKIDWNLLC</sequence>
<organism>
    <name type="scientific">Francisella tularensis subsp. tularensis (strain WY96-3418)</name>
    <dbReference type="NCBI Taxonomy" id="418136"/>
    <lineage>
        <taxon>Bacteria</taxon>
        <taxon>Pseudomonadati</taxon>
        <taxon>Pseudomonadota</taxon>
        <taxon>Gammaproteobacteria</taxon>
        <taxon>Thiotrichales</taxon>
        <taxon>Francisellaceae</taxon>
        <taxon>Francisella</taxon>
    </lineage>
</organism>
<protein>
    <recommendedName>
        <fullName evidence="1">Uracil-DNA glycosylase</fullName>
        <shortName evidence="1">UDG</shortName>
        <ecNumber evidence="1">3.2.2.27</ecNumber>
    </recommendedName>
</protein>
<feature type="chain" id="PRO_1000009893" description="Uracil-DNA glycosylase">
    <location>
        <begin position="1"/>
        <end position="220"/>
    </location>
</feature>
<feature type="active site" description="Proton acceptor" evidence="1">
    <location>
        <position position="60"/>
    </location>
</feature>